<keyword id="KW-0150">Chloroplast</keyword>
<keyword id="KW-0903">Direct protein sequencing</keyword>
<keyword id="KW-1015">Disulfide bond</keyword>
<keyword id="KW-0326">Glycosidase</keyword>
<keyword id="KW-0378">Hydrolase</keyword>
<keyword id="KW-0934">Plastid</keyword>
<keyword id="KW-1185">Reference proteome</keyword>
<keyword id="KW-0809">Transit peptide</keyword>
<reference key="1">
    <citation type="journal article" date="2006" name="Plant Physiol.">
        <title>Molecular and structural characterization of hexameric beta-D-glucosidases in wheat and rye.</title>
        <authorList>
            <person name="Sue M."/>
            <person name="Yamazaki K."/>
            <person name="Yajima S."/>
            <person name="Nomura T."/>
            <person name="Matsukawa T."/>
            <person name="Iwamura H."/>
            <person name="Miyamoto T."/>
        </authorList>
    </citation>
    <scope>NUCLEOTIDE SEQUENCE [MRNA]</scope>
    <scope>FUNCTION</scope>
    <scope>CATALYTIC ACTIVITY</scope>
    <scope>DEVELOPMENTAL STAGE</scope>
    <scope>SUBUNIT</scope>
    <source>
        <strain>cv. Chinese Spring</strain>
        <tissue>Shoot</tissue>
    </source>
</reference>
<reference key="2">
    <citation type="journal article" date="2000" name="Planta">
        <title>Purification and characterization of a hydroxamic acid glucoside beta-glucosidase from wheat (Triticum aestivum L.) seedlings.</title>
        <authorList>
            <person name="Sue M."/>
            <person name="Ishihara A."/>
            <person name="Iwamura H."/>
        </authorList>
    </citation>
    <scope>PROTEIN SEQUENCE OF 51-62</scope>
    <scope>FUNCTION</scope>
    <scope>CATALYTIC ACTIVITY</scope>
    <scope>BIOPHYSICOCHEMICAL PROPERTIES</scope>
    <scope>TISSUE SPECIFICITY</scope>
    <scope>SUBUNIT</scope>
    <source>
        <strain>cv. Asakazekomugi</strain>
    </source>
</reference>
<sequence length="570" mass="64565">MALLAAATLNPTTHLSIRSRAGHNSENLWLRSAASSQKSKGRFCNLTVRAGTPSKPAEPIGPVFTKLKPWQIPKRDWFDKDFLFGASTSAYQIEGAWNEDGKGPSTWDHFCHTYPERISDRTNGDVAANSYHLYEEDVKALKDMGMKVYRFSISWSRILPNGTGKPNQKGIDYYNNLINSLIHHGIVPYVTIWHWDTPQALEDKYGGFLNRQIVNDYKHFAKVCFESFGDRVKNWFTFNEPHTYCCFSYGEGIHAPGRCSPGMDCAVPEGDSLREPYTAGHHILLAHAEAVELFKAHYNEHGDSKIGMAFDVMGYEPYQDSFLDDQARERSIDYNLGWFLEPVVRGDYPFSMRSLIGDRLPMFTKEEQEKLASSCDIMGLNYYTSRFSKHVDISSDFTPKLNTDDAYASSETKGSDGNDIGPITGTYWIYMYPKGLTDLLLIMKEKYGNPPIFITENGIADVDSDPTMTDPLDDWKRLDYLQRHISAVKDAIDQGADVRGHFTWGLIDNFEWSLGYSSRFGLVYIDKKDGNKRKLKKSAKWFAKFNSVPKALLKTTNTNNKPAVTASVSL</sequence>
<dbReference type="EC" id="3.2.1.182" evidence="6 7"/>
<dbReference type="EC" id="3.2.1.21" evidence="6 7"/>
<dbReference type="EMBL" id="AB236423">
    <property type="protein sequence ID" value="BAE92260.1"/>
    <property type="molecule type" value="mRNA"/>
</dbReference>
<dbReference type="SMR" id="Q1XH04"/>
<dbReference type="STRING" id="4565.Q1XH04"/>
<dbReference type="CAZy" id="GH1">
    <property type="family name" value="Glycoside Hydrolase Family 1"/>
</dbReference>
<dbReference type="EnsemblPlants" id="TraesARI2D03G01320920.1">
    <property type="protein sequence ID" value="TraesARI2D03G01320920.1"/>
    <property type="gene ID" value="TraesARI2D03G01320920"/>
</dbReference>
<dbReference type="EnsemblPlants" id="TraesCAD_scaffold_042119_01G000100.1">
    <property type="protein sequence ID" value="TraesCAD_scaffold_042119_01G000100.1"/>
    <property type="gene ID" value="TraesCAD_scaffold_042119_01G000100"/>
</dbReference>
<dbReference type="EnsemblPlants" id="TraesCLE_scaffold_036634_01G000200.1">
    <property type="protein sequence ID" value="TraesCLE_scaffold_036634_01G000200.1"/>
    <property type="gene ID" value="TraesCLE_scaffold_036634_01G000200"/>
</dbReference>
<dbReference type="EnsemblPlants" id="TraesCS2D02G594400.1">
    <property type="protein sequence ID" value="TraesCS2D02G594400.1"/>
    <property type="gene ID" value="TraesCS2D02G594400"/>
</dbReference>
<dbReference type="EnsemblPlants" id="TraesCS2D03G1268900.1">
    <property type="protein sequence ID" value="TraesCS2D03G1268900.1.CDS"/>
    <property type="gene ID" value="TraesCS2D03G1268900"/>
</dbReference>
<dbReference type="EnsemblPlants" id="TraesJAG2D03G01306010.1">
    <property type="protein sequence ID" value="TraesJAG2D03G01306010.1"/>
    <property type="gene ID" value="TraesJAG2D03G01306010"/>
</dbReference>
<dbReference type="EnsemblPlants" id="TraesJUL2D03G01309270.1">
    <property type="protein sequence ID" value="TraesJUL2D03G01309270.1"/>
    <property type="gene ID" value="TraesJUL2D03G01309270"/>
</dbReference>
<dbReference type="EnsemblPlants" id="TraesKAR2D01G0464250.1">
    <property type="protein sequence ID" value="cds.TraesKAR2D01G0464250.1"/>
    <property type="gene ID" value="TraesKAR2D01G0464250"/>
</dbReference>
<dbReference type="EnsemblPlants" id="TraesLDM2D03G01298410.1">
    <property type="protein sequence ID" value="TraesLDM2D03G01298410.1"/>
    <property type="gene ID" value="TraesLDM2D03G01298410"/>
</dbReference>
<dbReference type="EnsemblPlants" id="TraesMAC2D03G01295790.1">
    <property type="protein sequence ID" value="TraesMAC2D03G01295790.1"/>
    <property type="gene ID" value="TraesMAC2D03G01295790"/>
</dbReference>
<dbReference type="EnsemblPlants" id="TraesNOR2D03G01313970.1">
    <property type="protein sequence ID" value="TraesNOR2D03G01313970.1"/>
    <property type="gene ID" value="TraesNOR2D03G01313970"/>
</dbReference>
<dbReference type="EnsemblPlants" id="TraesPARA_EIv1.0_0761760.1">
    <property type="protein sequence ID" value="TraesPARA_EIv1.0_0761760.1.CDS"/>
    <property type="gene ID" value="TraesPARA_EIv1.0_0761760"/>
</dbReference>
<dbReference type="EnsemblPlants" id="TraesROB_scaffold_040451_01G000200.1">
    <property type="protein sequence ID" value="TraesROB_scaffold_040451_01G000200.1"/>
    <property type="gene ID" value="TraesROB_scaffold_040451_01G000200"/>
</dbReference>
<dbReference type="EnsemblPlants" id="TraesSTA2D03G01286200.1">
    <property type="protein sequence ID" value="TraesSTA2D03G01286200.1"/>
    <property type="gene ID" value="TraesSTA2D03G01286200"/>
</dbReference>
<dbReference type="EnsemblPlants" id="TraesSYM2D03G01316080.1">
    <property type="protein sequence ID" value="TraesSYM2D03G01316080.1"/>
    <property type="gene ID" value="TraesSYM2D03G01316080"/>
</dbReference>
<dbReference type="Gramene" id="TraesARI2D03G01320920.1">
    <property type="protein sequence ID" value="TraesARI2D03G01320920.1"/>
    <property type="gene ID" value="TraesARI2D03G01320920"/>
</dbReference>
<dbReference type="Gramene" id="TraesCAD_scaffold_042119_01G000100.1">
    <property type="protein sequence ID" value="TraesCAD_scaffold_042119_01G000100.1"/>
    <property type="gene ID" value="TraesCAD_scaffold_042119_01G000100"/>
</dbReference>
<dbReference type="Gramene" id="TraesCLE_scaffold_036634_01G000200.1">
    <property type="protein sequence ID" value="TraesCLE_scaffold_036634_01G000200.1"/>
    <property type="gene ID" value="TraesCLE_scaffold_036634_01G000200"/>
</dbReference>
<dbReference type="Gramene" id="TraesCS2D02G594400.1">
    <property type="protein sequence ID" value="TraesCS2D02G594400.1"/>
    <property type="gene ID" value="TraesCS2D02G594400"/>
</dbReference>
<dbReference type="Gramene" id="TraesCS2D03G1268900.1">
    <property type="protein sequence ID" value="TraesCS2D03G1268900.1.CDS"/>
    <property type="gene ID" value="TraesCS2D03G1268900"/>
</dbReference>
<dbReference type="Gramene" id="TraesJAG2D03G01306010.1">
    <property type="protein sequence ID" value="TraesJAG2D03G01306010.1"/>
    <property type="gene ID" value="TraesJAG2D03G01306010"/>
</dbReference>
<dbReference type="Gramene" id="TraesJUL2D03G01309270.1">
    <property type="protein sequence ID" value="TraesJUL2D03G01309270.1"/>
    <property type="gene ID" value="TraesJUL2D03G01309270"/>
</dbReference>
<dbReference type="Gramene" id="TraesKAR2D01G0464250.1">
    <property type="protein sequence ID" value="cds.TraesKAR2D01G0464250.1"/>
    <property type="gene ID" value="TraesKAR2D01G0464250"/>
</dbReference>
<dbReference type="Gramene" id="TraesLDM2D03G01298410.1">
    <property type="protein sequence ID" value="TraesLDM2D03G01298410.1"/>
    <property type="gene ID" value="TraesLDM2D03G01298410"/>
</dbReference>
<dbReference type="Gramene" id="TraesMAC2D03G01295790.1">
    <property type="protein sequence ID" value="TraesMAC2D03G01295790.1"/>
    <property type="gene ID" value="TraesMAC2D03G01295790"/>
</dbReference>
<dbReference type="Gramene" id="TraesNOR2D03G01313970.1">
    <property type="protein sequence ID" value="TraesNOR2D03G01313970.1"/>
    <property type="gene ID" value="TraesNOR2D03G01313970"/>
</dbReference>
<dbReference type="Gramene" id="TraesPARA_EIv1.0_0761760.1">
    <property type="protein sequence ID" value="TraesPARA_EIv1.0_0761760.1.CDS"/>
    <property type="gene ID" value="TraesPARA_EIv1.0_0761760"/>
</dbReference>
<dbReference type="Gramene" id="TraesROB_scaffold_040451_01G000200.1">
    <property type="protein sequence ID" value="TraesROB_scaffold_040451_01G000200.1"/>
    <property type="gene ID" value="TraesROB_scaffold_040451_01G000200"/>
</dbReference>
<dbReference type="Gramene" id="TraesSTA2D03G01286200.1">
    <property type="protein sequence ID" value="TraesSTA2D03G01286200.1"/>
    <property type="gene ID" value="TraesSTA2D03G01286200"/>
</dbReference>
<dbReference type="Gramene" id="TraesSYM2D03G01316080.1">
    <property type="protein sequence ID" value="TraesSYM2D03G01316080.1"/>
    <property type="gene ID" value="TraesSYM2D03G01316080"/>
</dbReference>
<dbReference type="OMA" id="HNSENLW"/>
<dbReference type="OrthoDB" id="774279at2759"/>
<dbReference type="BRENDA" id="3.2.1.21">
    <property type="organism ID" value="6500"/>
</dbReference>
<dbReference type="SABIO-RK" id="Q1XH04"/>
<dbReference type="Proteomes" id="UP000019116">
    <property type="component" value="Chromosome 2D"/>
</dbReference>
<dbReference type="ExpressionAtlas" id="Q1XH04">
    <property type="expression patterns" value="baseline"/>
</dbReference>
<dbReference type="GO" id="GO:0009507">
    <property type="term" value="C:chloroplast"/>
    <property type="evidence" value="ECO:0007669"/>
    <property type="project" value="UniProtKB-SubCell"/>
</dbReference>
<dbReference type="GO" id="GO:0008422">
    <property type="term" value="F:beta-glucosidase activity"/>
    <property type="evidence" value="ECO:0000318"/>
    <property type="project" value="GO_Central"/>
</dbReference>
<dbReference type="GO" id="GO:0102726">
    <property type="term" value="F:DIMBOA glucoside beta-D-glucosidase activity"/>
    <property type="evidence" value="ECO:0007669"/>
    <property type="project" value="UniProtKB-EC"/>
</dbReference>
<dbReference type="GO" id="GO:0005975">
    <property type="term" value="P:carbohydrate metabolic process"/>
    <property type="evidence" value="ECO:0007669"/>
    <property type="project" value="InterPro"/>
</dbReference>
<dbReference type="FunFam" id="3.20.20.80:FF:000041">
    <property type="entry name" value="Beta-glucosidase 7"/>
    <property type="match status" value="1"/>
</dbReference>
<dbReference type="Gene3D" id="3.20.20.80">
    <property type="entry name" value="Glycosidases"/>
    <property type="match status" value="1"/>
</dbReference>
<dbReference type="InterPro" id="IPR001360">
    <property type="entry name" value="Glyco_hydro_1"/>
</dbReference>
<dbReference type="InterPro" id="IPR018120">
    <property type="entry name" value="Glyco_hydro_1_AS"/>
</dbReference>
<dbReference type="InterPro" id="IPR033132">
    <property type="entry name" value="Glyco_hydro_1_N_CS"/>
</dbReference>
<dbReference type="InterPro" id="IPR017853">
    <property type="entry name" value="Glycoside_hydrolase_SF"/>
</dbReference>
<dbReference type="PANTHER" id="PTHR10353:SF326">
    <property type="entry name" value="4-HYDROXY-7-METHOXY-3-OXO-3,4-DIHYDRO-2H-1,4-BENZOXAZIN-2-YL GLUCOSIDE BETA-D-GLUCOSIDASE 1, CHLOROPLASTIC"/>
    <property type="match status" value="1"/>
</dbReference>
<dbReference type="PANTHER" id="PTHR10353">
    <property type="entry name" value="GLYCOSYL HYDROLASE"/>
    <property type="match status" value="1"/>
</dbReference>
<dbReference type="Pfam" id="PF00232">
    <property type="entry name" value="Glyco_hydro_1"/>
    <property type="match status" value="1"/>
</dbReference>
<dbReference type="PRINTS" id="PR00131">
    <property type="entry name" value="GLHYDRLASE1"/>
</dbReference>
<dbReference type="SUPFAM" id="SSF51445">
    <property type="entry name" value="(Trans)glycosidases"/>
    <property type="match status" value="1"/>
</dbReference>
<dbReference type="PROSITE" id="PS00572">
    <property type="entry name" value="GLYCOSYL_HYDROL_F1_1"/>
    <property type="match status" value="1"/>
</dbReference>
<dbReference type="PROSITE" id="PS00653">
    <property type="entry name" value="GLYCOSYL_HYDROL_F1_2"/>
    <property type="match status" value="1"/>
</dbReference>
<gene>
    <name type="primary">GLU1C</name>
</gene>
<name>HGL1C_WHEAT</name>
<evidence type="ECO:0000250" key="1"/>
<evidence type="ECO:0000250" key="2">
    <source>
        <dbReference type="UniProtKB" id="Q1XH05"/>
    </source>
</evidence>
<evidence type="ECO:0000250" key="3">
    <source>
        <dbReference type="UniProtKB" id="Q7XSK0"/>
    </source>
</evidence>
<evidence type="ECO:0000250" key="4">
    <source>
        <dbReference type="UniProtKB" id="Q9SPP9"/>
    </source>
</evidence>
<evidence type="ECO:0000255" key="5">
    <source>
        <dbReference type="PROSITE-ProRule" id="PRU10055"/>
    </source>
</evidence>
<evidence type="ECO:0000269" key="6">
    <source>
    </source>
</evidence>
<evidence type="ECO:0000269" key="7">
    <source>
    </source>
</evidence>
<evidence type="ECO:0000305" key="8"/>
<protein>
    <recommendedName>
        <fullName>4-hydroxy-7-methoxy-3-oxo-3,4-dihydro-2H-1,4-benzoxazin-2-yl glucoside beta-D-glucosidase 1c, chloroplastic</fullName>
        <ecNumber evidence="6 7">3.2.1.182</ecNumber>
    </recommendedName>
    <alternativeName>
        <fullName>Beta-glucosidase 1c</fullName>
        <shortName>Taglu1c</shortName>
        <ecNumber evidence="6 7">3.2.1.21</ecNumber>
    </alternativeName>
</protein>
<organism>
    <name type="scientific">Triticum aestivum</name>
    <name type="common">Wheat</name>
    <dbReference type="NCBI Taxonomy" id="4565"/>
    <lineage>
        <taxon>Eukaryota</taxon>
        <taxon>Viridiplantae</taxon>
        <taxon>Streptophyta</taxon>
        <taxon>Embryophyta</taxon>
        <taxon>Tracheophyta</taxon>
        <taxon>Spermatophyta</taxon>
        <taxon>Magnoliopsida</taxon>
        <taxon>Liliopsida</taxon>
        <taxon>Poales</taxon>
        <taxon>Poaceae</taxon>
        <taxon>BOP clade</taxon>
        <taxon>Pooideae</taxon>
        <taxon>Triticodae</taxon>
        <taxon>Triticeae</taxon>
        <taxon>Triticinae</taxon>
        <taxon>Triticum</taxon>
    </lineage>
</organism>
<feature type="transit peptide" description="Chloroplast" evidence="1">
    <location>
        <begin position="1"/>
        <end position="50"/>
    </location>
</feature>
<feature type="chain" id="PRO_0000424099" description="4-hydroxy-7-methoxy-3-oxo-3,4-dihydro-2H-1,4-benzoxazin-2-yl glucoside beta-D-glucosidase 1c, chloroplastic">
    <location>
        <begin position="51"/>
        <end position="570"/>
    </location>
</feature>
<feature type="active site" description="Proton donor" evidence="3">
    <location>
        <position position="240"/>
    </location>
</feature>
<feature type="active site" description="Nucleophile" evidence="5">
    <location>
        <position position="456"/>
    </location>
</feature>
<feature type="binding site" evidence="3">
    <location>
        <position position="92"/>
    </location>
    <ligand>
        <name>a beta-D-glucoside</name>
        <dbReference type="ChEBI" id="CHEBI:22798"/>
    </ligand>
</feature>
<feature type="binding site" evidence="3">
    <location>
        <position position="194"/>
    </location>
    <ligand>
        <name>a beta-D-glucoside</name>
        <dbReference type="ChEBI" id="CHEBI:22798"/>
    </ligand>
</feature>
<feature type="binding site" evidence="3">
    <location>
        <begin position="239"/>
        <end position="240"/>
    </location>
    <ligand>
        <name>a beta-D-glucoside</name>
        <dbReference type="ChEBI" id="CHEBI:22798"/>
    </ligand>
</feature>
<feature type="binding site" evidence="3">
    <location>
        <position position="383"/>
    </location>
    <ligand>
        <name>a beta-D-glucoside</name>
        <dbReference type="ChEBI" id="CHEBI:22798"/>
    </ligand>
</feature>
<feature type="binding site" evidence="4">
    <location>
        <position position="456"/>
    </location>
    <ligand>
        <name>a beta-D-glucoside</name>
        <dbReference type="ChEBI" id="CHEBI:22798"/>
    </ligand>
</feature>
<feature type="binding site" evidence="3">
    <location>
        <position position="504"/>
    </location>
    <ligand>
        <name>a beta-D-glucoside</name>
        <dbReference type="ChEBI" id="CHEBI:22798"/>
    </ligand>
</feature>
<feature type="binding site" evidence="3">
    <location>
        <begin position="511"/>
        <end position="512"/>
    </location>
    <ligand>
        <name>a beta-D-glucoside</name>
        <dbReference type="ChEBI" id="CHEBI:22798"/>
    </ligand>
</feature>
<feature type="binding site" evidence="2">
    <location>
        <position position="520"/>
    </location>
    <ligand>
        <name>a beta-D-glucoside</name>
        <dbReference type="ChEBI" id="CHEBI:22798"/>
    </ligand>
</feature>
<feature type="disulfide bond" evidence="3">
    <location>
        <begin position="259"/>
        <end position="265"/>
    </location>
</feature>
<accession>Q1XH04</accession>
<proteinExistence type="evidence at protein level"/>
<comment type="function">
    <text evidence="6 7">Acts in defense of young plant parts against pests via the production of hydroxamic acids from hydroxamic acid glucosides. Enzymatic activity is highly correlated with plant growth. The preferred substrate is DIMBOA-beta-D-glucoside.</text>
</comment>
<comment type="catalytic activity">
    <reaction evidence="6 7">
        <text>Hydrolysis of terminal, non-reducing beta-D-glucosyl residues with release of beta-D-glucose.</text>
        <dbReference type="EC" id="3.2.1.21"/>
    </reaction>
</comment>
<comment type="catalytic activity">
    <reaction evidence="6 7">
        <text>DIMBOA beta-D-glucoside + H2O = DIMBOA + D-glucose</text>
        <dbReference type="Rhea" id="RHEA:33975"/>
        <dbReference type="ChEBI" id="CHEBI:4167"/>
        <dbReference type="ChEBI" id="CHEBI:15377"/>
        <dbReference type="ChEBI" id="CHEBI:18048"/>
        <dbReference type="ChEBI" id="CHEBI:37573"/>
        <dbReference type="EC" id="3.2.1.182"/>
    </reaction>
</comment>
<comment type="catalytic activity">
    <reaction evidence="6 7">
        <text>DIBOA beta-D-glucoside + H2O = DIBOA + D-glucose</text>
        <dbReference type="Rhea" id="RHEA:33979"/>
        <dbReference type="ChEBI" id="CHEBI:4167"/>
        <dbReference type="ChEBI" id="CHEBI:15377"/>
        <dbReference type="ChEBI" id="CHEBI:63558"/>
        <dbReference type="ChEBI" id="CHEBI:63670"/>
        <dbReference type="EC" id="3.2.1.182"/>
    </reaction>
</comment>
<comment type="biophysicochemical properties">
    <kinetics>
        <KM evidence="6">1.34 mM for DIBOA-beta-D-glucoside (with native hexamer)</KM>
        <KM evidence="6">1.05 mM for DIBOA-beta-D-glucoside (with recombinant enzyme)</KM>
        <KM evidence="6">0.272 mM for DIMBOA-beta-D-glucoside (with native hexamer)</KM>
        <KM evidence="6">0.39 mM for DIMBOA-beta-D-glucoside (with recombinant enzyme)</KM>
        <KM evidence="6">2.02 mM for HBOA-beta-D-glucoside (with native hexamer)</KM>
        <KM evidence="6">0.32 mM for HMBOA-beta-D-glucoside (with native hexamer)</KM>
        <KM evidence="6">1.7 mM for p-nitrophenyl beta-D-glucopyranoside (with native hexamer)</KM>
        <KM evidence="6">1.75 mM for p-nitrophenyl beta-D-glucopyranoside (with recombinant enzyme)</KM>
        <KM evidence="6">1.78 mM for p-nitrophenyl beta-D-galactopyranoside (with native hexamer)</KM>
        <KM evidence="6">3.11 mM for p-nitrophenyl beta-D-xyloside (with native hexamer)</KM>
        <KM evidence="6">0.67 mM for p-nitrophenyl beta-D-fucoside (with native hexamer)</KM>
        <KM evidence="6">0.24 mM for esculin (with native hexamer)</KM>
        <Vmax evidence="6">1060.0 nmol/sec/mg enzyme with DIBOA-beta-D-glucoside as substrate (with native hexamer)</Vmax>
        <Vmax evidence="6">4100.0 nmol/sec/mg enzyme with DIMBOA-beta-D-glucoside as substrate (with native hexamer)</Vmax>
        <Vmax evidence="6">220.0 nmol/sec/mg enzyme with HBOA-beta-D-glucoside as substrate (with native hexamer)</Vmax>
        <Vmax evidence="6">540.0 nmol/sec/mg enzyme with HMBOA-beta-D-glucoside as substrate (with native hexamer)</Vmax>
        <Vmax evidence="6">520.0 nmol/sec/mg enzyme with p-nitrophenyl beta-D-glucopyranoside as substrate (with native hexamer)</Vmax>
        <Vmax evidence="6">47.0 nmol/sec/mg enzyme with p-nitrophenyl beta-D-galactopyranoside as substrate (with native hexamer)</Vmax>
        <Vmax evidence="6">35.0 nmol/sec/mg enzyme with p-nitrophenyl beta-D-xyloside as substrate (with native hexamer)</Vmax>
        <Vmax evidence="6">1080.0 nmol/sec/mg enzyme with p-nitrophenyl beta-D-fucoside as substrate (with native hexamer)</Vmax>
        <Vmax evidence="6">320.0 nmol/sec/mg enzyme with esculin as substrate (with native hexamer)</Vmax>
        <text>kcat is 137 sec(-1) with DIBOA-beta-D-glucoside as substrate (with recombinant enzyme). kcat is 773 sec(-1) with DIMBOA-beta-D-glucoside as substrate (with recombinant enzyme). kcat is 235.9 sec(-1) with p-nitrophenyl beta-D-glucopyranoside as substrate (with recombinant enzyme).</text>
    </kinetics>
    <phDependence>
        <text evidence="6">Optimum pH is 5.5.</text>
    </phDependence>
</comment>
<comment type="subunit">
    <text evidence="6 7">Homo- and heterohexamers.</text>
</comment>
<comment type="subcellular location">
    <subcellularLocation>
        <location evidence="8">Plastid</location>
        <location evidence="8">Chloroplast</location>
    </subcellularLocation>
</comment>
<comment type="tissue specificity">
    <text evidence="6">Expressed in young seedlings early after germination.</text>
</comment>
<comment type="developmental stage">
    <text evidence="7">Peak of expression 36 to 48 hours after imbibition.</text>
</comment>
<comment type="miscellaneous">
    <text>Wheat is a hexaploid with three different genomes that contains at least four genes coding for GLU1: GLU1A (AC Q1XIR9), GLU1B (AC Q1XH05), GLU1C (AC Q1XH04) and GLU1D (AC D5MTF8). The monomers can aggregate in diverse combinations, reflecting the several isozymes found in the native enzyme described in PubMed:10750901.</text>
</comment>
<comment type="similarity">
    <text evidence="8">Belongs to the glycosyl hydrolase 1 family.</text>
</comment>